<dbReference type="EMBL" id="BX950851">
    <property type="protein sequence ID" value="CAG75720.1"/>
    <property type="molecule type" value="Genomic_DNA"/>
</dbReference>
<dbReference type="RefSeq" id="WP_011094354.1">
    <property type="nucleotide sequence ID" value="NC_004547.2"/>
</dbReference>
<dbReference type="SMR" id="Q6D3C4"/>
<dbReference type="STRING" id="218491.ECA2820"/>
<dbReference type="KEGG" id="eca:ECA2820"/>
<dbReference type="PATRIC" id="fig|218491.5.peg.2860"/>
<dbReference type="eggNOG" id="COG0556">
    <property type="taxonomic scope" value="Bacteria"/>
</dbReference>
<dbReference type="HOGENOM" id="CLU_009621_2_1_6"/>
<dbReference type="OrthoDB" id="9806651at2"/>
<dbReference type="Proteomes" id="UP000007966">
    <property type="component" value="Chromosome"/>
</dbReference>
<dbReference type="GO" id="GO:0005737">
    <property type="term" value="C:cytoplasm"/>
    <property type="evidence" value="ECO:0007669"/>
    <property type="project" value="UniProtKB-SubCell"/>
</dbReference>
<dbReference type="GO" id="GO:0009380">
    <property type="term" value="C:excinuclease repair complex"/>
    <property type="evidence" value="ECO:0007669"/>
    <property type="project" value="InterPro"/>
</dbReference>
<dbReference type="GO" id="GO:0005524">
    <property type="term" value="F:ATP binding"/>
    <property type="evidence" value="ECO:0007669"/>
    <property type="project" value="UniProtKB-UniRule"/>
</dbReference>
<dbReference type="GO" id="GO:0016887">
    <property type="term" value="F:ATP hydrolysis activity"/>
    <property type="evidence" value="ECO:0007669"/>
    <property type="project" value="InterPro"/>
</dbReference>
<dbReference type="GO" id="GO:0003677">
    <property type="term" value="F:DNA binding"/>
    <property type="evidence" value="ECO:0007669"/>
    <property type="project" value="UniProtKB-UniRule"/>
</dbReference>
<dbReference type="GO" id="GO:0009381">
    <property type="term" value="F:excinuclease ABC activity"/>
    <property type="evidence" value="ECO:0007669"/>
    <property type="project" value="UniProtKB-UniRule"/>
</dbReference>
<dbReference type="GO" id="GO:0006289">
    <property type="term" value="P:nucleotide-excision repair"/>
    <property type="evidence" value="ECO:0007669"/>
    <property type="project" value="UniProtKB-UniRule"/>
</dbReference>
<dbReference type="GO" id="GO:0009432">
    <property type="term" value="P:SOS response"/>
    <property type="evidence" value="ECO:0007669"/>
    <property type="project" value="UniProtKB-UniRule"/>
</dbReference>
<dbReference type="CDD" id="cd17916">
    <property type="entry name" value="DEXHc_UvrB"/>
    <property type="match status" value="1"/>
</dbReference>
<dbReference type="CDD" id="cd18790">
    <property type="entry name" value="SF2_C_UvrB"/>
    <property type="match status" value="1"/>
</dbReference>
<dbReference type="FunFam" id="3.40.50.300:FF:000257">
    <property type="entry name" value="UvrABC system protein B"/>
    <property type="match status" value="1"/>
</dbReference>
<dbReference type="FunFam" id="3.40.50.300:FF:000401">
    <property type="entry name" value="UvrABC system protein B"/>
    <property type="match status" value="1"/>
</dbReference>
<dbReference type="FunFam" id="3.40.50.300:FF:000477">
    <property type="entry name" value="UvrABC system protein B"/>
    <property type="match status" value="1"/>
</dbReference>
<dbReference type="Gene3D" id="3.40.50.300">
    <property type="entry name" value="P-loop containing nucleotide triphosphate hydrolases"/>
    <property type="match status" value="3"/>
</dbReference>
<dbReference type="Gene3D" id="4.10.860.10">
    <property type="entry name" value="UVR domain"/>
    <property type="match status" value="1"/>
</dbReference>
<dbReference type="HAMAP" id="MF_00204">
    <property type="entry name" value="UvrB"/>
    <property type="match status" value="1"/>
</dbReference>
<dbReference type="InterPro" id="IPR006935">
    <property type="entry name" value="Helicase/UvrB_N"/>
</dbReference>
<dbReference type="InterPro" id="IPR014001">
    <property type="entry name" value="Helicase_ATP-bd"/>
</dbReference>
<dbReference type="InterPro" id="IPR001650">
    <property type="entry name" value="Helicase_C-like"/>
</dbReference>
<dbReference type="InterPro" id="IPR027417">
    <property type="entry name" value="P-loop_NTPase"/>
</dbReference>
<dbReference type="InterPro" id="IPR001943">
    <property type="entry name" value="UVR_dom"/>
</dbReference>
<dbReference type="InterPro" id="IPR036876">
    <property type="entry name" value="UVR_dom_sf"/>
</dbReference>
<dbReference type="InterPro" id="IPR004807">
    <property type="entry name" value="UvrB"/>
</dbReference>
<dbReference type="InterPro" id="IPR041471">
    <property type="entry name" value="UvrB_inter"/>
</dbReference>
<dbReference type="InterPro" id="IPR024759">
    <property type="entry name" value="UvrB_YAD/RRR_dom"/>
</dbReference>
<dbReference type="NCBIfam" id="NF003673">
    <property type="entry name" value="PRK05298.1"/>
    <property type="match status" value="1"/>
</dbReference>
<dbReference type="NCBIfam" id="TIGR00631">
    <property type="entry name" value="uvrb"/>
    <property type="match status" value="1"/>
</dbReference>
<dbReference type="PANTHER" id="PTHR24029">
    <property type="entry name" value="UVRABC SYSTEM PROTEIN B"/>
    <property type="match status" value="1"/>
</dbReference>
<dbReference type="PANTHER" id="PTHR24029:SF0">
    <property type="entry name" value="UVRABC SYSTEM PROTEIN B"/>
    <property type="match status" value="1"/>
</dbReference>
<dbReference type="Pfam" id="PF00271">
    <property type="entry name" value="Helicase_C"/>
    <property type="match status" value="1"/>
</dbReference>
<dbReference type="Pfam" id="PF04851">
    <property type="entry name" value="ResIII"/>
    <property type="match status" value="1"/>
</dbReference>
<dbReference type="Pfam" id="PF02151">
    <property type="entry name" value="UVR"/>
    <property type="match status" value="1"/>
</dbReference>
<dbReference type="Pfam" id="PF12344">
    <property type="entry name" value="UvrB"/>
    <property type="match status" value="1"/>
</dbReference>
<dbReference type="Pfam" id="PF17757">
    <property type="entry name" value="UvrB_inter"/>
    <property type="match status" value="1"/>
</dbReference>
<dbReference type="SMART" id="SM00487">
    <property type="entry name" value="DEXDc"/>
    <property type="match status" value="1"/>
</dbReference>
<dbReference type="SMART" id="SM00490">
    <property type="entry name" value="HELICc"/>
    <property type="match status" value="1"/>
</dbReference>
<dbReference type="SUPFAM" id="SSF46600">
    <property type="entry name" value="C-terminal UvrC-binding domain of UvrB"/>
    <property type="match status" value="1"/>
</dbReference>
<dbReference type="SUPFAM" id="SSF52540">
    <property type="entry name" value="P-loop containing nucleoside triphosphate hydrolases"/>
    <property type="match status" value="2"/>
</dbReference>
<dbReference type="PROSITE" id="PS51192">
    <property type="entry name" value="HELICASE_ATP_BIND_1"/>
    <property type="match status" value="1"/>
</dbReference>
<dbReference type="PROSITE" id="PS51194">
    <property type="entry name" value="HELICASE_CTER"/>
    <property type="match status" value="1"/>
</dbReference>
<dbReference type="PROSITE" id="PS50151">
    <property type="entry name" value="UVR"/>
    <property type="match status" value="1"/>
</dbReference>
<accession>Q6D3C4</accession>
<protein>
    <recommendedName>
        <fullName evidence="1">UvrABC system protein B</fullName>
        <shortName evidence="1">Protein UvrB</shortName>
    </recommendedName>
    <alternativeName>
        <fullName evidence="1">Excinuclease ABC subunit B</fullName>
    </alternativeName>
</protein>
<sequence length="670" mass="75843">MSKAFTLNSDFKPAGDQPEAIRRLKEGLEDGLAHQTLLGVTGSGKTFTIANVIADLNRPTMMLAPNKTLAAQLYGEMKEFFPENAVEYFVSYYDYYQPEAYVPSSDTFIEKDASVNEHIEQMRLSATKALLERRDVIVVASVSAIYGLGDPDLYLKMMLHLTQGMLIDQRAILRRLAELQYARNDQAFQRGTFRVRGEVIDIFPAESDEIALRVELFDEEVERLSLFDPLTGHVLQTVPRYTIYPKTHYVTPRERILQAMEDIKVELADRKKVLLANDKLVEEQRLSQRTQFDLEMMNELGYCSGIENYSRYLSGRGPGEPPPTLFDYLPADGLLVIDESHVTVPQIGGMYRGDRARKETLVEYGFRLPSALDNRPMKFEEFEALAPQTIYVSATPSHYELEKSGGDVIDQVVRPTGLLDPIIEVRPVGTQVDDLLSEIRLRAAINERVLVTTLTKRMAEDLTEYLQEHGERVRYLHSDIDTVERVEIIRDLRLGEFDVLVGINLLREGLDMPEVSLVAILDADKEGFLRSERSLIQTIGRAARNLRGKAILYGDRITASMAKAISETERRREKQEAYNTEHGIVPQGINKKISDILQLGQSANKGKGRGNRKAAEPAARYELMTPKALELKIRELESKMLTHAQNLEFEEAAALRDEVQVLRAQFIAIS</sequence>
<comment type="function">
    <text evidence="1">The UvrABC repair system catalyzes the recognition and processing of DNA lesions. A damage recognition complex composed of 2 UvrA and 2 UvrB subunits scans DNA for abnormalities. Upon binding of the UvrA(2)B(2) complex to a putative damaged site, the DNA wraps around one UvrB monomer. DNA wrap is dependent on ATP binding by UvrB and probably causes local melting of the DNA helix, facilitating insertion of UvrB beta-hairpin between the DNA strands. Then UvrB probes one DNA strand for the presence of a lesion. If a lesion is found the UvrA subunits dissociate and the UvrB-DNA preincision complex is formed. This complex is subsequently bound by UvrC and the second UvrB is released. If no lesion is found, the DNA wraps around the other UvrB subunit that will check the other stand for damage.</text>
</comment>
<comment type="subunit">
    <text evidence="1">Forms a heterotetramer with UvrA during the search for lesions. Interacts with UvrC in an incision complex.</text>
</comment>
<comment type="subcellular location">
    <subcellularLocation>
        <location evidence="1">Cytoplasm</location>
    </subcellularLocation>
</comment>
<comment type="domain">
    <text evidence="1">The beta-hairpin motif is involved in DNA binding.</text>
</comment>
<comment type="similarity">
    <text evidence="1">Belongs to the UvrB family.</text>
</comment>
<proteinExistence type="inferred from homology"/>
<evidence type="ECO:0000255" key="1">
    <source>
        <dbReference type="HAMAP-Rule" id="MF_00204"/>
    </source>
</evidence>
<keyword id="KW-0067">ATP-binding</keyword>
<keyword id="KW-0963">Cytoplasm</keyword>
<keyword id="KW-0227">DNA damage</keyword>
<keyword id="KW-0228">DNA excision</keyword>
<keyword id="KW-0234">DNA repair</keyword>
<keyword id="KW-0267">Excision nuclease</keyword>
<keyword id="KW-0547">Nucleotide-binding</keyword>
<keyword id="KW-1185">Reference proteome</keyword>
<keyword id="KW-0742">SOS response</keyword>
<gene>
    <name evidence="1" type="primary">uvrB</name>
    <name type="ordered locus">ECA2820</name>
</gene>
<feature type="chain" id="PRO_0000227313" description="UvrABC system protein B">
    <location>
        <begin position="1"/>
        <end position="670"/>
    </location>
</feature>
<feature type="domain" description="Helicase ATP-binding" evidence="1">
    <location>
        <begin position="26"/>
        <end position="414"/>
    </location>
</feature>
<feature type="domain" description="Helicase C-terminal" evidence="1">
    <location>
        <begin position="431"/>
        <end position="597"/>
    </location>
</feature>
<feature type="domain" description="UVR" evidence="1">
    <location>
        <begin position="630"/>
        <end position="665"/>
    </location>
</feature>
<feature type="short sequence motif" description="Beta-hairpin">
    <location>
        <begin position="92"/>
        <end position="115"/>
    </location>
</feature>
<feature type="binding site" evidence="1">
    <location>
        <begin position="39"/>
        <end position="46"/>
    </location>
    <ligand>
        <name>ATP</name>
        <dbReference type="ChEBI" id="CHEBI:30616"/>
    </ligand>
</feature>
<name>UVRB_PECAS</name>
<reference key="1">
    <citation type="journal article" date="2004" name="Proc. Natl. Acad. Sci. U.S.A.">
        <title>Genome sequence of the enterobacterial phytopathogen Erwinia carotovora subsp. atroseptica and characterization of virulence factors.</title>
        <authorList>
            <person name="Bell K.S."/>
            <person name="Sebaihia M."/>
            <person name="Pritchard L."/>
            <person name="Holden M.T.G."/>
            <person name="Hyman L.J."/>
            <person name="Holeva M.C."/>
            <person name="Thomson N.R."/>
            <person name="Bentley S.D."/>
            <person name="Churcher L.J.C."/>
            <person name="Mungall K."/>
            <person name="Atkin R."/>
            <person name="Bason N."/>
            <person name="Brooks K."/>
            <person name="Chillingworth T."/>
            <person name="Clark K."/>
            <person name="Doggett J."/>
            <person name="Fraser A."/>
            <person name="Hance Z."/>
            <person name="Hauser H."/>
            <person name="Jagels K."/>
            <person name="Moule S."/>
            <person name="Norbertczak H."/>
            <person name="Ormond D."/>
            <person name="Price C."/>
            <person name="Quail M.A."/>
            <person name="Sanders M."/>
            <person name="Walker D."/>
            <person name="Whitehead S."/>
            <person name="Salmond G.P.C."/>
            <person name="Birch P.R.J."/>
            <person name="Parkhill J."/>
            <person name="Toth I.K."/>
        </authorList>
    </citation>
    <scope>NUCLEOTIDE SEQUENCE [LARGE SCALE GENOMIC DNA]</scope>
    <source>
        <strain>SCRI 1043 / ATCC BAA-672</strain>
    </source>
</reference>
<organism>
    <name type="scientific">Pectobacterium atrosepticum (strain SCRI 1043 / ATCC BAA-672)</name>
    <name type="common">Erwinia carotovora subsp. atroseptica</name>
    <dbReference type="NCBI Taxonomy" id="218491"/>
    <lineage>
        <taxon>Bacteria</taxon>
        <taxon>Pseudomonadati</taxon>
        <taxon>Pseudomonadota</taxon>
        <taxon>Gammaproteobacteria</taxon>
        <taxon>Enterobacterales</taxon>
        <taxon>Pectobacteriaceae</taxon>
        <taxon>Pectobacterium</taxon>
    </lineage>
</organism>